<organism>
    <name type="scientific">Xenopus laevis</name>
    <name type="common">African clawed frog</name>
    <dbReference type="NCBI Taxonomy" id="8355"/>
    <lineage>
        <taxon>Eukaryota</taxon>
        <taxon>Metazoa</taxon>
        <taxon>Chordata</taxon>
        <taxon>Craniata</taxon>
        <taxon>Vertebrata</taxon>
        <taxon>Euteleostomi</taxon>
        <taxon>Amphibia</taxon>
        <taxon>Batrachia</taxon>
        <taxon>Anura</taxon>
        <taxon>Pipoidea</taxon>
        <taxon>Pipidae</taxon>
        <taxon>Xenopodinae</taxon>
        <taxon>Xenopus</taxon>
        <taxon>Xenopus</taxon>
    </lineage>
</organism>
<dbReference type="EMBL" id="BC082679">
    <property type="protein sequence ID" value="AAH82679.1"/>
    <property type="molecule type" value="mRNA"/>
</dbReference>
<dbReference type="RefSeq" id="NP_001087999.1">
    <property type="nucleotide sequence ID" value="NM_001094530.1"/>
</dbReference>
<dbReference type="SMR" id="Q640E9"/>
<dbReference type="BioGRID" id="104768">
    <property type="interactions" value="1"/>
</dbReference>
<dbReference type="IntAct" id="Q640E9">
    <property type="interactions" value="1"/>
</dbReference>
<dbReference type="DNASU" id="494688"/>
<dbReference type="GeneID" id="494688"/>
<dbReference type="KEGG" id="xla:494688"/>
<dbReference type="AGR" id="Xenbase:XB-GENE-943127"/>
<dbReference type="CTD" id="494688"/>
<dbReference type="Xenbase" id="XB-GENE-943127">
    <property type="gene designation" value="pym1.L"/>
</dbReference>
<dbReference type="OMA" id="DSEMPTS"/>
<dbReference type="OrthoDB" id="21625at2759"/>
<dbReference type="Proteomes" id="UP000186698">
    <property type="component" value="Chromosome 2L"/>
</dbReference>
<dbReference type="Bgee" id="494688">
    <property type="expression patterns" value="Expressed in muscle tissue and 19 other cell types or tissues"/>
</dbReference>
<dbReference type="GO" id="GO:0005737">
    <property type="term" value="C:cytoplasm"/>
    <property type="evidence" value="ECO:0000318"/>
    <property type="project" value="GO_Central"/>
</dbReference>
<dbReference type="GO" id="GO:0035145">
    <property type="term" value="C:exon-exon junction complex"/>
    <property type="evidence" value="ECO:0000250"/>
    <property type="project" value="UniProtKB"/>
</dbReference>
<dbReference type="GO" id="GO:0005730">
    <property type="term" value="C:nucleolus"/>
    <property type="evidence" value="ECO:0007669"/>
    <property type="project" value="UniProtKB-SubCell"/>
</dbReference>
<dbReference type="GO" id="GO:0005654">
    <property type="term" value="C:nucleoplasm"/>
    <property type="evidence" value="ECO:0007669"/>
    <property type="project" value="UniProtKB-SubCell"/>
</dbReference>
<dbReference type="GO" id="GO:0043022">
    <property type="term" value="F:ribosome binding"/>
    <property type="evidence" value="ECO:0000250"/>
    <property type="project" value="UniProtKB"/>
</dbReference>
<dbReference type="GO" id="GO:0003723">
    <property type="term" value="F:RNA binding"/>
    <property type="evidence" value="ECO:0000318"/>
    <property type="project" value="GO_Central"/>
</dbReference>
<dbReference type="GO" id="GO:1903259">
    <property type="term" value="P:exon-exon junction complex disassembly"/>
    <property type="evidence" value="ECO:0000318"/>
    <property type="project" value="GO_Central"/>
</dbReference>
<dbReference type="GO" id="GO:0000184">
    <property type="term" value="P:nuclear-transcribed mRNA catabolic process, nonsense-mediated decay"/>
    <property type="evidence" value="ECO:0000250"/>
    <property type="project" value="UniProtKB"/>
</dbReference>
<dbReference type="GO" id="GO:0045727">
    <property type="term" value="P:positive regulation of translation"/>
    <property type="evidence" value="ECO:0000250"/>
    <property type="project" value="UniProtKB"/>
</dbReference>
<dbReference type="InterPro" id="IPR039333">
    <property type="entry name" value="PYM1"/>
</dbReference>
<dbReference type="InterPro" id="IPR015362">
    <property type="entry name" value="WIBG_mago-bd"/>
</dbReference>
<dbReference type="InterPro" id="IPR036348">
    <property type="entry name" value="WIBG_N_sf"/>
</dbReference>
<dbReference type="PANTHER" id="PTHR22959:SF0">
    <property type="entry name" value="PARTNER OF Y14 AND MAGO"/>
    <property type="match status" value="1"/>
</dbReference>
<dbReference type="PANTHER" id="PTHR22959">
    <property type="entry name" value="PYM PROTEIN"/>
    <property type="match status" value="1"/>
</dbReference>
<dbReference type="Pfam" id="PF09282">
    <property type="entry name" value="Mago-bind"/>
    <property type="match status" value="1"/>
</dbReference>
<dbReference type="SMART" id="SM01273">
    <property type="entry name" value="Mago-bind"/>
    <property type="match status" value="1"/>
</dbReference>
<dbReference type="SUPFAM" id="SSF101931">
    <property type="entry name" value="Pym (Within the bgcn gene intron protein, WIBG), N-terminal domain"/>
    <property type="match status" value="1"/>
</dbReference>
<feature type="chain" id="PRO_0000287288" description="Partner of Y14 and mago">
    <location>
        <begin position="1"/>
        <end position="199"/>
    </location>
</feature>
<feature type="region of interest" description="Disordered" evidence="5">
    <location>
        <begin position="1"/>
        <end position="30"/>
    </location>
</feature>
<feature type="region of interest" description="Disordered" evidence="5">
    <location>
        <begin position="54"/>
        <end position="147"/>
    </location>
</feature>
<feature type="coiled-coil region" evidence="4">
    <location>
        <begin position="83"/>
        <end position="199"/>
    </location>
</feature>
<feature type="compositionally biased region" description="Basic residues" evidence="5">
    <location>
        <begin position="85"/>
        <end position="95"/>
    </location>
</feature>
<feature type="compositionally biased region" description="Basic and acidic residues" evidence="5">
    <location>
        <begin position="96"/>
        <end position="117"/>
    </location>
</feature>
<feature type="compositionally biased region" description="Polar residues" evidence="5">
    <location>
        <begin position="118"/>
        <end position="141"/>
    </location>
</feature>
<proteinExistence type="evidence at transcript level"/>
<comment type="function">
    <text evidence="1">Key regulator of the exon junction complex (EJC), a multiprotein complex that associates immediately upstream of the exon-exon junction on mRNAs and serves as a positional landmark for the intron exon structure of genes and directs post-transcriptional processes in the cytoplasm such as mRNA export, nonsense-mediated mRNA decay (NMD) or translation. Acts as an EJC disassembly factor, allowing translation-dependent EJC removal and recycling by disrupting mature EJC from spliced mRNAs. Its association with the 40S ribosomal subunit probably prevents a translation-independent disassembly of the EJC from spliced mRNAs, by restricting its activity to mRNAs that have been translated. Interferes with NMD and enhances translation of spliced mRNAs, probably by antagonizing EJC functions (By similarity).</text>
</comment>
<comment type="subunit">
    <text evidence="1">Interacts (via N-terminus) with magoh and rbm8a; the interaction is direct. Associates (eIF2A-like region) with the 40S ribosomal subunit and the 48S preinitiation complex (By similarity).</text>
</comment>
<comment type="subcellular location">
    <subcellularLocation>
        <location evidence="3">Cytoplasm</location>
    </subcellularLocation>
    <subcellularLocation>
        <location evidence="3">Nucleus</location>
        <location evidence="3">Nucleolus</location>
    </subcellularLocation>
    <subcellularLocation>
        <location evidence="3">Nucleus</location>
        <location evidence="3">Nucleoplasm</location>
    </subcellularLocation>
    <text evidence="3">Shuttles between the nucleus and the cytoplasm. Nuclear export is mediated by XPO1/CRM1.</text>
</comment>
<comment type="similarity">
    <text evidence="6">Belongs to the pym family.</text>
</comment>
<name>PYM1_XENLA</name>
<keyword id="KW-0175">Coiled coil</keyword>
<keyword id="KW-0963">Cytoplasm</keyword>
<keyword id="KW-0866">Nonsense-mediated mRNA decay</keyword>
<keyword id="KW-0539">Nucleus</keyword>
<keyword id="KW-1185">Reference proteome</keyword>
<keyword id="KW-0810">Translation regulation</keyword>
<sequence length="199" mass="22553">MAAPYVSDDSGKYIASTQRPDGSWRKQRKVKEGYVPQEEVPVYENKYVKFFKSKPSLPPGLCEADGTTGQAQPSKPDADASLSKTAKRNLKRKEKRKQEKGEREQVEETRQDLERVNISDTPVQKNVTSAHKNGSASSDNSAAEKAKKIKNLRKKLRQVEELQQKIDCGEIIQPSKEQLEKLARRKALEDEIEDLELDL</sequence>
<gene>
    <name evidence="3" type="primary">pym1</name>
    <name type="synonym">pym</name>
    <name type="synonym">wibg</name>
</gene>
<evidence type="ECO:0000250" key="1"/>
<evidence type="ECO:0000250" key="2">
    <source>
        <dbReference type="UniProtKB" id="P82804"/>
    </source>
</evidence>
<evidence type="ECO:0000250" key="3">
    <source>
        <dbReference type="UniProtKB" id="Q9BRP8"/>
    </source>
</evidence>
<evidence type="ECO:0000255" key="4"/>
<evidence type="ECO:0000256" key="5">
    <source>
        <dbReference type="SAM" id="MobiDB-lite"/>
    </source>
</evidence>
<evidence type="ECO:0000305" key="6"/>
<reference key="1">
    <citation type="submission" date="2004-09" db="EMBL/GenBank/DDBJ databases">
        <authorList>
            <consortium name="NIH - Xenopus Gene Collection (XGC) project"/>
        </authorList>
    </citation>
    <scope>NUCLEOTIDE SEQUENCE [LARGE SCALE MRNA]</scope>
    <source>
        <tissue>Tadpole</tissue>
    </source>
</reference>
<accession>Q640E9</accession>
<protein>
    <recommendedName>
        <fullName evidence="2">Partner of Y14 and mago</fullName>
    </recommendedName>
    <alternativeName>
        <fullName evidence="3">PYM homolog 1 exon junction complex-associated factor</fullName>
    </alternativeName>
    <alternativeName>
        <fullName>Protein wibg homolog</fullName>
    </alternativeName>
</protein>